<accession>P09867</accession>
<accession>Q2KJC4</accession>
<protein>
    <recommendedName>
        <fullName>Heterogeneous nuclear ribonucleoprotein A1</fullName>
        <shortName>hnRNP A1</shortName>
    </recommendedName>
    <alternativeName>
        <fullName>Helix-destabilizing protein</fullName>
    </alternativeName>
    <alternativeName>
        <fullName>Single-strand RNA-binding protein</fullName>
    </alternativeName>
    <alternativeName>
        <fullName>Unwinding protein 1</fullName>
        <shortName>UP1</shortName>
    </alternativeName>
    <alternativeName>
        <fullName>hnRNP core protein A1</fullName>
    </alternativeName>
    <component>
        <recommendedName>
            <fullName>Heterogeneous nuclear ribonucleoprotein A1, N-terminally processed</fullName>
        </recommendedName>
    </component>
</protein>
<keyword id="KW-0007">Acetylation</keyword>
<keyword id="KW-0963">Cytoplasm</keyword>
<keyword id="KW-0903">Direct protein sequencing</keyword>
<keyword id="KW-1017">Isopeptide bond</keyword>
<keyword id="KW-0488">Methylation</keyword>
<keyword id="KW-0507">mRNA processing</keyword>
<keyword id="KW-0508">mRNA splicing</keyword>
<keyword id="KW-0509">mRNA transport</keyword>
<keyword id="KW-0539">Nucleus</keyword>
<keyword id="KW-0597">Phosphoprotein</keyword>
<keyword id="KW-1185">Reference proteome</keyword>
<keyword id="KW-0677">Repeat</keyword>
<keyword id="KW-0687">Ribonucleoprotein</keyword>
<keyword id="KW-0694">RNA-binding</keyword>
<keyword id="KW-0747">Spliceosome</keyword>
<keyword id="KW-0813">Transport</keyword>
<keyword id="KW-0832">Ubl conjugation</keyword>
<gene>
    <name type="primary">HNRNPA1</name>
    <name type="synonym">HNRPA1</name>
</gene>
<evidence type="ECO:0000250" key="1"/>
<evidence type="ECO:0000250" key="2">
    <source>
        <dbReference type="UniProtKB" id="P04256"/>
    </source>
</evidence>
<evidence type="ECO:0000250" key="3">
    <source>
        <dbReference type="UniProtKB" id="P09651"/>
    </source>
</evidence>
<evidence type="ECO:0000250" key="4">
    <source>
        <dbReference type="UniProtKB" id="P49312"/>
    </source>
</evidence>
<evidence type="ECO:0000255" key="5">
    <source>
        <dbReference type="PROSITE-ProRule" id="PRU00176"/>
    </source>
</evidence>
<evidence type="ECO:0000256" key="6">
    <source>
        <dbReference type="SAM" id="MobiDB-lite"/>
    </source>
</evidence>
<evidence type="ECO:0000269" key="7">
    <source>
    </source>
</evidence>
<evidence type="ECO:0000269" key="8">
    <source>
    </source>
</evidence>
<evidence type="ECO:0000269" key="9">
    <source>
    </source>
</evidence>
<evidence type="ECO:0000305" key="10"/>
<comment type="function">
    <text evidence="3">Involved in the packaging of pre-mRNA into hnRNP particles, transport of poly(A) mRNA from the nucleus to the cytoplasm and modulation of splice site selection. Plays a role in the splicing of pyruvate kinase PKM by binding repressively to sequences flanking PKM exon 9, inhibiting exon 9 inclusion and resulting in exon 10 inclusion and production of the PKM M2 isoform. Binds to the IRES and thereby inhibits the translation of the apoptosis protease activating factor APAF1. May bind to specific miRNA hairpins.</text>
</comment>
<comment type="subunit">
    <text evidence="3">Identified in the spliceosome C complex. Identified in a IGF2BP1-dependent mRNP granule complex containing untranslated mRNAs. Interacts with SEPT6. Interacts with C9orf72. Interacts with KHDRBS1. Interacts with UBQLN2 (By similarity). Interacts with PPIA/CYPA (By similarity).</text>
</comment>
<comment type="subcellular location">
    <subcellularLocation>
        <location evidence="3">Nucleus</location>
    </subcellularLocation>
    <subcellularLocation>
        <location evidence="3">Cytoplasm</location>
    </subcellularLocation>
    <text evidence="3">Localized in cytoplasmic mRNP granules containing untranslated mRNAs. Shuttles continuously between the nucleus and the cytoplasm along with mRNA. Component of ribonucleosomes.</text>
</comment>
<comment type="PTM">
    <text>UP1 is derived from A1 by proteolytic degradation.</text>
</comment>
<comment type="PTM">
    <text>The N-terminus is blocked.</text>
</comment>
<comment type="PTM">
    <text evidence="1">Sumoylated.</text>
</comment>
<proteinExistence type="evidence at protein level"/>
<name>ROA1_BOVIN</name>
<sequence>MSKSESPKEPEQLRKLFIGGLSFETTDESLRSHFEQWGTLTDCVVMRDPNTKRSRGFGFVTYATVEEVDAAMNARPHKVDGRVVEPKRAVSREDSQRPGAHLTVKKIFVGGIKEDTEEHHLRDYFEQYGKIEVIEIMTDRGSGKKRGFAFVTFDDHDSVDKIVIQKYHTVNGHNCEVRKALSKQEMASASSSQRGRSGSGNFGGGRGGGFGGNDNFGRGGNFSGRGGFGGSRGGGGYGGSGDGYNGFGNDGSNFGGGGSYNDFGNYNNQSSNFGPMKGGNFGGRSSGPYGGGGQYFAKPRNQGGYGGSSSSSSYGSGRRF</sequence>
<dbReference type="EMBL" id="BC105413">
    <property type="protein sequence ID" value="AAI05414.1"/>
    <property type="molecule type" value="mRNA"/>
</dbReference>
<dbReference type="PIR" id="A27241">
    <property type="entry name" value="A27241"/>
</dbReference>
<dbReference type="RefSeq" id="NP_001039376.1">
    <property type="nucleotide sequence ID" value="NM_001045911.1"/>
</dbReference>
<dbReference type="RefSeq" id="XP_059742156.1">
    <property type="nucleotide sequence ID" value="XM_059886173.1"/>
</dbReference>
<dbReference type="RefSeq" id="XP_059742157.1">
    <property type="nucleotide sequence ID" value="XM_059886174.1"/>
</dbReference>
<dbReference type="BMRB" id="P09867"/>
<dbReference type="SMR" id="P09867"/>
<dbReference type="FunCoup" id="P09867">
    <property type="interactions" value="3205"/>
</dbReference>
<dbReference type="STRING" id="9913.ENSBTAP00000062134"/>
<dbReference type="iPTMnet" id="P09867"/>
<dbReference type="PaxDb" id="9913-ENSBTAP00000002033"/>
<dbReference type="PeptideAtlas" id="P09867"/>
<dbReference type="GeneID" id="505093"/>
<dbReference type="KEGG" id="bta:505093"/>
<dbReference type="CTD" id="3178"/>
<dbReference type="VEuPathDB" id="HostDB:ENSBTAG00000001553"/>
<dbReference type="eggNOG" id="KOG0118">
    <property type="taxonomic scope" value="Eukaryota"/>
</dbReference>
<dbReference type="HOGENOM" id="CLU_012062_1_0_1"/>
<dbReference type="InParanoid" id="P09867"/>
<dbReference type="OrthoDB" id="1875751at2759"/>
<dbReference type="TreeFam" id="TF351342"/>
<dbReference type="Reactome" id="R-BTA-6803529">
    <property type="pathway name" value="FGFR2 alternative splicing"/>
</dbReference>
<dbReference type="Reactome" id="R-BTA-72163">
    <property type="pathway name" value="mRNA Splicing - Major Pathway"/>
</dbReference>
<dbReference type="Reactome" id="R-BTA-72203">
    <property type="pathway name" value="Processing of Capped Intron-Containing Pre-mRNA"/>
</dbReference>
<dbReference type="Proteomes" id="UP000009136">
    <property type="component" value="Chromosome 5"/>
</dbReference>
<dbReference type="Bgee" id="ENSBTAG00000001553">
    <property type="expression patterns" value="Expressed in thymus and 105 other cell types or tissues"/>
</dbReference>
<dbReference type="GO" id="GO:0071013">
    <property type="term" value="C:catalytic step 2 spliceosome"/>
    <property type="evidence" value="ECO:0000318"/>
    <property type="project" value="GO_Central"/>
</dbReference>
<dbReference type="GO" id="GO:0005737">
    <property type="term" value="C:cytoplasm"/>
    <property type="evidence" value="ECO:0007669"/>
    <property type="project" value="UniProtKB-SubCell"/>
</dbReference>
<dbReference type="GO" id="GO:0005634">
    <property type="term" value="C:nucleus"/>
    <property type="evidence" value="ECO:0000250"/>
    <property type="project" value="UniProtKB"/>
</dbReference>
<dbReference type="GO" id="GO:1990904">
    <property type="term" value="C:ribonucleoprotein complex"/>
    <property type="evidence" value="ECO:0000250"/>
    <property type="project" value="UniProtKB"/>
</dbReference>
<dbReference type="GO" id="GO:0035198">
    <property type="term" value="F:miRNA binding"/>
    <property type="evidence" value="ECO:0000250"/>
    <property type="project" value="UniProtKB"/>
</dbReference>
<dbReference type="GO" id="GO:1903936">
    <property type="term" value="P:cellular response to sodium arsenite"/>
    <property type="evidence" value="ECO:0000250"/>
    <property type="project" value="UniProtKB"/>
</dbReference>
<dbReference type="GO" id="GO:0000398">
    <property type="term" value="P:mRNA splicing, via spliceosome"/>
    <property type="evidence" value="ECO:0000318"/>
    <property type="project" value="GO_Central"/>
</dbReference>
<dbReference type="GO" id="GO:0051028">
    <property type="term" value="P:mRNA transport"/>
    <property type="evidence" value="ECO:0007669"/>
    <property type="project" value="UniProtKB-KW"/>
</dbReference>
<dbReference type="CDD" id="cd12761">
    <property type="entry name" value="RRM1_hnRNPA1"/>
    <property type="match status" value="1"/>
</dbReference>
<dbReference type="CDD" id="cd12582">
    <property type="entry name" value="RRM2_hnRNPA3"/>
    <property type="match status" value="1"/>
</dbReference>
<dbReference type="FunFam" id="3.30.70.330:FF:000048">
    <property type="entry name" value="Heterogeneous nuclear ribonucleoprotein a1 isoform"/>
    <property type="match status" value="1"/>
</dbReference>
<dbReference type="FunFam" id="3.30.70.330:FF:000429">
    <property type="entry name" value="Heterogeneous nuclear ribonucleoprotein A1-like 2"/>
    <property type="match status" value="1"/>
</dbReference>
<dbReference type="Gene3D" id="3.30.70.330">
    <property type="match status" value="2"/>
</dbReference>
<dbReference type="InterPro" id="IPR034516">
    <property type="entry name" value="hnRNPA1/3_RRM2"/>
</dbReference>
<dbReference type="InterPro" id="IPR021662">
    <property type="entry name" value="HnRNPA1/A2_C"/>
</dbReference>
<dbReference type="InterPro" id="IPR034845">
    <property type="entry name" value="hnRNPA1_RRM1"/>
</dbReference>
<dbReference type="InterPro" id="IPR012677">
    <property type="entry name" value="Nucleotide-bd_a/b_plait_sf"/>
</dbReference>
<dbReference type="InterPro" id="IPR035979">
    <property type="entry name" value="RBD_domain_sf"/>
</dbReference>
<dbReference type="InterPro" id="IPR000504">
    <property type="entry name" value="RRM_dom"/>
</dbReference>
<dbReference type="PANTHER" id="PTHR48026:SF2">
    <property type="entry name" value="HETEROGENEOUS NUCLEAR RIBONUCLEOPROTEIN A1-RELATED"/>
    <property type="match status" value="1"/>
</dbReference>
<dbReference type="PANTHER" id="PTHR48026">
    <property type="entry name" value="HOMOLOGOUS TO DROSOPHILA SQD (SQUID) PROTEIN"/>
    <property type="match status" value="1"/>
</dbReference>
<dbReference type="Pfam" id="PF11627">
    <property type="entry name" value="HnRNPA1_LC"/>
    <property type="match status" value="1"/>
</dbReference>
<dbReference type="Pfam" id="PF00076">
    <property type="entry name" value="RRM_1"/>
    <property type="match status" value="2"/>
</dbReference>
<dbReference type="SMART" id="SM00360">
    <property type="entry name" value="RRM"/>
    <property type="match status" value="2"/>
</dbReference>
<dbReference type="SUPFAM" id="SSF54928">
    <property type="entry name" value="RNA-binding domain, RBD"/>
    <property type="match status" value="2"/>
</dbReference>
<dbReference type="PROSITE" id="PS50102">
    <property type="entry name" value="RRM"/>
    <property type="match status" value="2"/>
</dbReference>
<organism>
    <name type="scientific">Bos taurus</name>
    <name type="common">Bovine</name>
    <dbReference type="NCBI Taxonomy" id="9913"/>
    <lineage>
        <taxon>Eukaryota</taxon>
        <taxon>Metazoa</taxon>
        <taxon>Chordata</taxon>
        <taxon>Craniata</taxon>
        <taxon>Vertebrata</taxon>
        <taxon>Euteleostomi</taxon>
        <taxon>Mammalia</taxon>
        <taxon>Eutheria</taxon>
        <taxon>Laurasiatheria</taxon>
        <taxon>Artiodactyla</taxon>
        <taxon>Ruminantia</taxon>
        <taxon>Pecora</taxon>
        <taxon>Bovidae</taxon>
        <taxon>Bovinae</taxon>
        <taxon>Bos</taxon>
    </lineage>
</organism>
<feature type="chain" id="PRO_0000424508" description="Heterogeneous nuclear ribonucleoprotein A1">
    <location>
        <begin position="1"/>
        <end position="320"/>
    </location>
</feature>
<feature type="initiator methionine" description="Removed; alternate" evidence="7 8 9">
    <location>
        <position position="1"/>
    </location>
</feature>
<feature type="chain" id="PRO_0000081827" description="Heterogeneous nuclear ribonucleoprotein A1, N-terminally processed">
    <location>
        <begin position="2"/>
        <end position="320"/>
    </location>
</feature>
<feature type="domain" description="RRM 1" evidence="5">
    <location>
        <begin position="14"/>
        <end position="97"/>
    </location>
</feature>
<feature type="domain" description="RRM 2" evidence="5">
    <location>
        <begin position="105"/>
        <end position="184"/>
    </location>
</feature>
<feature type="region of interest" description="Globular A domain">
    <location>
        <begin position="4"/>
        <end position="94"/>
    </location>
</feature>
<feature type="region of interest" description="Globular B domain">
    <location>
        <begin position="95"/>
        <end position="185"/>
    </location>
</feature>
<feature type="region of interest" description="Disordered" evidence="6">
    <location>
        <begin position="182"/>
        <end position="216"/>
    </location>
</feature>
<feature type="region of interest" description="RNA-binding RGG-box" evidence="1">
    <location>
        <begin position="218"/>
        <end position="240"/>
    </location>
</feature>
<feature type="region of interest" description="Nuclear targeting sequence (M9)" evidence="1">
    <location>
        <begin position="268"/>
        <end position="305"/>
    </location>
</feature>
<feature type="region of interest" description="Disordered" evidence="6">
    <location>
        <begin position="274"/>
        <end position="320"/>
    </location>
</feature>
<feature type="compositionally biased region" description="Gly residues" evidence="6">
    <location>
        <begin position="197"/>
        <end position="216"/>
    </location>
</feature>
<feature type="compositionally biased region" description="Gly residues" evidence="6">
    <location>
        <begin position="276"/>
        <end position="294"/>
    </location>
</feature>
<feature type="compositionally biased region" description="Low complexity" evidence="6">
    <location>
        <begin position="308"/>
        <end position="320"/>
    </location>
</feature>
<feature type="modified residue" description="N-acetylmethionine" evidence="3">
    <location>
        <position position="1"/>
    </location>
</feature>
<feature type="modified residue" description="N-acetylserine; in Heterogeneous nuclear ribonucleoprotein A1, N-terminally processed" evidence="3 10">
    <location>
        <position position="2"/>
    </location>
</feature>
<feature type="modified residue" description="Phosphoserine" evidence="3">
    <location>
        <position position="2"/>
    </location>
</feature>
<feature type="modified residue" description="N6-acetyllysine; alternate" evidence="3">
    <location>
        <position position="3"/>
    </location>
</feature>
<feature type="modified residue" description="Phosphoserine" evidence="3">
    <location>
        <position position="4"/>
    </location>
</feature>
<feature type="modified residue" description="Phosphoserine" evidence="3">
    <location>
        <position position="6"/>
    </location>
</feature>
<feature type="modified residue" description="Phosphoserine" evidence="4">
    <location>
        <position position="22"/>
    </location>
</feature>
<feature type="modified residue" description="Phosphoserine; by MKNK2" evidence="3">
    <location>
        <position position="192"/>
    </location>
</feature>
<feature type="modified residue" description="Asymmetric dimethylarginine; alternate" evidence="7 8">
    <location>
        <position position="194"/>
    </location>
</feature>
<feature type="modified residue" description="Dimethylated arginine; alternate" evidence="3">
    <location>
        <position position="194"/>
    </location>
</feature>
<feature type="modified residue" description="Omega-N-methylarginine; alternate" evidence="4">
    <location>
        <position position="194"/>
    </location>
</feature>
<feature type="modified residue" description="Phosphoserine" evidence="3">
    <location>
        <position position="199"/>
    </location>
</feature>
<feature type="modified residue" description="Asymmetric dimethylarginine; alternate" evidence="3">
    <location>
        <position position="206"/>
    </location>
</feature>
<feature type="modified residue" description="Dimethylated arginine; alternate" evidence="3">
    <location>
        <position position="206"/>
    </location>
</feature>
<feature type="modified residue" description="Omega-N-methylarginine; alternate" evidence="3">
    <location>
        <position position="206"/>
    </location>
</feature>
<feature type="modified residue" description="Asymmetric dimethylarginine; alternate" evidence="3">
    <location>
        <position position="218"/>
    </location>
</feature>
<feature type="modified residue" description="Omega-N-methylarginine; alternate" evidence="3">
    <location>
        <position position="218"/>
    </location>
</feature>
<feature type="modified residue" description="Asymmetric dimethylarginine; alternate" evidence="3">
    <location>
        <position position="225"/>
    </location>
</feature>
<feature type="modified residue" description="Dimethylated arginine; alternate" evidence="3">
    <location>
        <position position="225"/>
    </location>
</feature>
<feature type="modified residue" description="Omega-N-methylarginine; alternate" evidence="3">
    <location>
        <position position="225"/>
    </location>
</feature>
<feature type="modified residue" description="Asymmetric dimethylarginine; alternate" evidence="2">
    <location>
        <position position="232"/>
    </location>
</feature>
<feature type="modified residue" description="Omega-N-methylarginine; alternate" evidence="3">
    <location>
        <position position="232"/>
    </location>
</feature>
<feature type="modified residue" description="Omega-N-methylarginine" evidence="3">
    <location>
        <position position="284"/>
    </location>
</feature>
<feature type="modified residue" description="Phosphoserine" evidence="3">
    <location>
        <position position="285"/>
    </location>
</feature>
<feature type="modified residue" description="N6-acetyllysine; alternate" evidence="3">
    <location>
        <position position="298"/>
    </location>
</feature>
<feature type="modified residue" description="Omega-N-methylarginine" evidence="3">
    <location>
        <position position="300"/>
    </location>
</feature>
<feature type="modified residue" description="Phosphoserine" evidence="3">
    <location>
        <position position="309"/>
    </location>
</feature>
<feature type="modified residue" description="Phosphoserine; by MKNK2" evidence="3">
    <location>
        <position position="310"/>
    </location>
</feature>
<feature type="modified residue" description="Phosphoserine; by MKNK2" evidence="3">
    <location>
        <position position="311"/>
    </location>
</feature>
<feature type="modified residue" description="Phosphoserine; by MKNK2" evidence="3">
    <location>
        <position position="312"/>
    </location>
</feature>
<feature type="modified residue" description="Phosphoserine" evidence="3">
    <location>
        <position position="313"/>
    </location>
</feature>
<feature type="modified residue" description="Phosphoserine" evidence="3">
    <location>
        <position position="316"/>
    </location>
</feature>
<feature type="modified residue" description="Omega-N-methylarginine" evidence="3">
    <location>
        <position position="318"/>
    </location>
</feature>
<feature type="cross-link" description="Glycyl lysine isopeptide (Lys-Gly) (interchain with G-Cter in SUMO2); alternate" evidence="3">
    <location>
        <position position="3"/>
    </location>
</feature>
<feature type="cross-link" description="Glycyl lysine isopeptide (Lys-Gly) (interchain with G-Cter in SUMO2)" evidence="3">
    <location>
        <position position="8"/>
    </location>
</feature>
<feature type="cross-link" description="Glycyl lysine isopeptide (Lys-Gly) (interchain with G-Cter in SUMO2)" evidence="3">
    <location>
        <position position="78"/>
    </location>
</feature>
<feature type="cross-link" description="Glycyl lysine isopeptide (Lys-Gly) (interchain with G-Cter in SUMO)" evidence="1">
    <location>
        <position position="113"/>
    </location>
</feature>
<feature type="cross-link" description="Glycyl lysine isopeptide (Lys-Gly) (interchain with G-Cter in SUMO2)" evidence="3">
    <location>
        <position position="179"/>
    </location>
</feature>
<feature type="cross-link" description="Glycyl lysine isopeptide (Lys-Gly) (interchain with G-Cter in SUMO2)" evidence="3">
    <location>
        <position position="183"/>
    </location>
</feature>
<feature type="cross-link" description="Glycyl lysine isopeptide (Lys-Gly) (interchain with G-Cter in SUMO2); alternate" evidence="3">
    <location>
        <position position="298"/>
    </location>
</feature>
<reference key="1">
    <citation type="submission" date="2005-09" db="EMBL/GenBank/DDBJ databases">
        <authorList>
            <consortium name="NIH - Mammalian Gene Collection (MGC) project"/>
        </authorList>
    </citation>
    <scope>NUCLEOTIDE SEQUENCE [LARGE SCALE MRNA]</scope>
    <source>
        <strain>Hereford</strain>
        <tissue>Thymus</tissue>
    </source>
</reference>
<reference key="2">
    <citation type="journal article" date="1987" name="Int. J. Pept. Protein Res.">
        <title>Amino acid sequence of UP1, an hnRNP-derived single-stranded nucleic acid binding protein from calf thymus.</title>
        <authorList>
            <person name="Merrill B.M."/>
            <person name="Lopresti M.B."/>
            <person name="Stone K.L."/>
            <person name="Williams K.R."/>
        </authorList>
    </citation>
    <scope>PROTEIN SEQUENCE OF 2-196</scope>
    <scope>METHYLATION AT ARG-194</scope>
    <scope>BLOCKED N-TERMINUS</scope>
    <source>
        <tissue>Thymus</tissue>
    </source>
</reference>
<reference key="3">
    <citation type="journal article" date="1985" name="Proc. Natl. Acad. Sci. U.S.A.">
        <title>Amino acid sequence of the UP1 calf thymus helix-destabilizing protein and its homology to an analogous protein from mouse myeloma.</title>
        <authorList>
            <person name="Williams K.R."/>
            <person name="Stone K.L."/>
            <person name="Lopresti M.B."/>
            <person name="Merrill B.M."/>
            <person name="Planck S.R."/>
        </authorList>
    </citation>
    <scope>PROTEIN SEQUENCE OF 2-196</scope>
    <scope>METHYLATION AT ARG-194</scope>
    <scope>BLOCKED N-TERMINUS</scope>
    <source>
        <tissue>Thymus</tissue>
    </source>
</reference>
<reference key="4">
    <citation type="journal article" date="1986" name="J. Biol. Chem.">
        <title>High pressure liquid chromatography purification of UP1 and UP2, two related single-stranded nucleic acid-binding proteins from calf thymus.</title>
        <authorList>
            <person name="Merrill B.M."/>
            <person name="Lopresti M.B."/>
            <person name="Stone K.L."/>
            <person name="Williams K.R."/>
        </authorList>
    </citation>
    <scope>PROTEIN SEQUENCE OF 2-185</scope>
    <source>
        <tissue>Thymus</tissue>
    </source>
</reference>